<proteinExistence type="evidence at protein level"/>
<evidence type="ECO:0000250" key="1">
    <source>
        <dbReference type="UniProtKB" id="P02142"/>
    </source>
</evidence>
<evidence type="ECO:0000255" key="2">
    <source>
        <dbReference type="PROSITE-ProRule" id="PRU00238"/>
    </source>
</evidence>
<evidence type="ECO:0000269" key="3">
    <source>
    </source>
</evidence>
<evidence type="ECO:0000305" key="4"/>
<feature type="chain" id="PRO_0000052969" description="Hemoglobin cathodic subunit beta">
    <location>
        <begin position="1"/>
        <end position="146"/>
    </location>
</feature>
<feature type="domain" description="Globin" evidence="2">
    <location>
        <begin position="2"/>
        <end position="146"/>
    </location>
</feature>
<feature type="binding site" description="distal binding residue" evidence="1 2">
    <location>
        <position position="63"/>
    </location>
    <ligand>
        <name>heme b</name>
        <dbReference type="ChEBI" id="CHEBI:60344"/>
    </ligand>
    <ligandPart>
        <name>Fe</name>
        <dbReference type="ChEBI" id="CHEBI:18248"/>
    </ligandPart>
</feature>
<feature type="binding site" description="proximal binding residue" evidence="1 2">
    <location>
        <position position="92"/>
    </location>
    <ligand>
        <name>heme b</name>
        <dbReference type="ChEBI" id="CHEBI:60344"/>
    </ligand>
    <ligandPart>
        <name>Fe</name>
        <dbReference type="ChEBI" id="CHEBI:18248"/>
    </ligandPart>
</feature>
<keyword id="KW-0903">Direct protein sequencing</keyword>
<keyword id="KW-0349">Heme</keyword>
<keyword id="KW-0408">Iron</keyword>
<keyword id="KW-0479">Metal-binding</keyword>
<keyword id="KW-0561">Oxygen transport</keyword>
<keyword id="KW-0813">Transport</keyword>
<comment type="function">
    <text>Involved in oxygen transport from gills to the various peripheral tissues.</text>
</comment>
<comment type="subunit">
    <text evidence="4">Heterotetramer of two alpha chains and two beta chains.</text>
</comment>
<comment type="tissue specificity">
    <text evidence="4">Red blood cells.</text>
</comment>
<comment type="miscellaneous">
    <text>This fish has two hemoglobins: cathodic and anodic. Cathodic Hb has high oxygen affinity, low cooperativity and displays a small reverse Bohr effect. Anodic Hb has low oxygen affinity and cooperativity and displays a normal Bohr effect.</text>
</comment>
<comment type="similarity">
    <text evidence="2">Belongs to the globin family.</text>
</comment>
<dbReference type="SMR" id="P84204"/>
<dbReference type="GO" id="GO:0072562">
    <property type="term" value="C:blood microparticle"/>
    <property type="evidence" value="ECO:0007669"/>
    <property type="project" value="TreeGrafter"/>
</dbReference>
<dbReference type="GO" id="GO:0031838">
    <property type="term" value="C:haptoglobin-hemoglobin complex"/>
    <property type="evidence" value="ECO:0007669"/>
    <property type="project" value="TreeGrafter"/>
</dbReference>
<dbReference type="GO" id="GO:0005833">
    <property type="term" value="C:hemoglobin complex"/>
    <property type="evidence" value="ECO:0007669"/>
    <property type="project" value="InterPro"/>
</dbReference>
<dbReference type="GO" id="GO:0031720">
    <property type="term" value="F:haptoglobin binding"/>
    <property type="evidence" value="ECO:0007669"/>
    <property type="project" value="TreeGrafter"/>
</dbReference>
<dbReference type="GO" id="GO:0020037">
    <property type="term" value="F:heme binding"/>
    <property type="evidence" value="ECO:0007669"/>
    <property type="project" value="InterPro"/>
</dbReference>
<dbReference type="GO" id="GO:0046872">
    <property type="term" value="F:metal ion binding"/>
    <property type="evidence" value="ECO:0007669"/>
    <property type="project" value="UniProtKB-KW"/>
</dbReference>
<dbReference type="GO" id="GO:0043177">
    <property type="term" value="F:organic acid binding"/>
    <property type="evidence" value="ECO:0007669"/>
    <property type="project" value="TreeGrafter"/>
</dbReference>
<dbReference type="GO" id="GO:0019825">
    <property type="term" value="F:oxygen binding"/>
    <property type="evidence" value="ECO:0007669"/>
    <property type="project" value="InterPro"/>
</dbReference>
<dbReference type="GO" id="GO:0005344">
    <property type="term" value="F:oxygen carrier activity"/>
    <property type="evidence" value="ECO:0007669"/>
    <property type="project" value="UniProtKB-KW"/>
</dbReference>
<dbReference type="GO" id="GO:0004601">
    <property type="term" value="F:peroxidase activity"/>
    <property type="evidence" value="ECO:0007669"/>
    <property type="project" value="TreeGrafter"/>
</dbReference>
<dbReference type="GO" id="GO:0042744">
    <property type="term" value="P:hydrogen peroxide catabolic process"/>
    <property type="evidence" value="ECO:0007669"/>
    <property type="project" value="TreeGrafter"/>
</dbReference>
<dbReference type="CDD" id="cd08925">
    <property type="entry name" value="Hb-beta-like"/>
    <property type="match status" value="1"/>
</dbReference>
<dbReference type="FunFam" id="1.10.490.10:FF:000001">
    <property type="entry name" value="Hemoglobin subunit beta"/>
    <property type="match status" value="1"/>
</dbReference>
<dbReference type="Gene3D" id="1.10.490.10">
    <property type="entry name" value="Globins"/>
    <property type="match status" value="1"/>
</dbReference>
<dbReference type="InterPro" id="IPR000971">
    <property type="entry name" value="Globin"/>
</dbReference>
<dbReference type="InterPro" id="IPR009050">
    <property type="entry name" value="Globin-like_sf"/>
</dbReference>
<dbReference type="InterPro" id="IPR012292">
    <property type="entry name" value="Globin/Proto"/>
</dbReference>
<dbReference type="InterPro" id="IPR002337">
    <property type="entry name" value="Hemoglobin_b"/>
</dbReference>
<dbReference type="InterPro" id="IPR050056">
    <property type="entry name" value="Hemoglobin_oxygen_transport"/>
</dbReference>
<dbReference type="PANTHER" id="PTHR11442">
    <property type="entry name" value="HEMOGLOBIN FAMILY MEMBER"/>
    <property type="match status" value="1"/>
</dbReference>
<dbReference type="PANTHER" id="PTHR11442:SF7">
    <property type="entry name" value="HEMOGLOBIN SUBUNIT EPSILON"/>
    <property type="match status" value="1"/>
</dbReference>
<dbReference type="Pfam" id="PF00042">
    <property type="entry name" value="Globin"/>
    <property type="match status" value="1"/>
</dbReference>
<dbReference type="PRINTS" id="PR00814">
    <property type="entry name" value="BETAHAEM"/>
</dbReference>
<dbReference type="SUPFAM" id="SSF46458">
    <property type="entry name" value="Globin-like"/>
    <property type="match status" value="1"/>
</dbReference>
<dbReference type="PROSITE" id="PS01033">
    <property type="entry name" value="GLOBIN"/>
    <property type="match status" value="1"/>
</dbReference>
<sequence>VEWSSSERSTITSLWGKVIPAEIGPVAFARVLIVYPWTQRYFGNFGDLSNIAAISGNAKVAAHGKVVLDGVDKAVKNLDNIKGAYTSLSLLHSEKLNVDPDNFKLLGDCLTIVLATKFGAEFTPKVQAVWQKFLIVLIHALSRQYF</sequence>
<protein>
    <recommendedName>
        <fullName>Hemoglobin cathodic subunit beta</fullName>
    </recommendedName>
    <alternativeName>
        <fullName>Hemoglobin cathodic beta chain</fullName>
    </alternativeName>
</protein>
<name>HBBC_GYMUN</name>
<reference evidence="4" key="1">
    <citation type="journal article" date="2001" name="Eur. J. Biochem.">
        <title>The hemoglobin system of the brown moray Gymnothorax unicolor: structure/function relationships.</title>
        <authorList>
            <person name="Tamburrini M."/>
            <person name="Verde C."/>
            <person name="Olianas A."/>
            <person name="Giardina B."/>
            <person name="Corda M."/>
            <person name="Sanna M.T."/>
            <person name="Fais A."/>
            <person name="Deiana A.M."/>
            <person name="di Prisco G."/>
            <person name="Pellegrini M."/>
        </authorList>
    </citation>
    <scope>PROTEIN SEQUENCE</scope>
    <source>
        <tissue evidence="3">Erythrocyte</tissue>
    </source>
</reference>
<accession>P84204</accession>
<organism>
    <name type="scientific">Gymnothorax unicolor</name>
    <name type="common">Brown moray</name>
    <name type="synonym">Muraenophis unicolor</name>
    <dbReference type="NCBI Taxonomy" id="296138"/>
    <lineage>
        <taxon>Eukaryota</taxon>
        <taxon>Metazoa</taxon>
        <taxon>Chordata</taxon>
        <taxon>Craniata</taxon>
        <taxon>Vertebrata</taxon>
        <taxon>Euteleostomi</taxon>
        <taxon>Actinopterygii</taxon>
        <taxon>Neopterygii</taxon>
        <taxon>Teleostei</taxon>
        <taxon>Anguilliformes</taxon>
        <taxon>Muraenidae</taxon>
        <taxon>Gymnothorax</taxon>
    </lineage>
</organism>